<sequence>MVHHYSMSCPDLEAIEQVEWEFSRQLSRRRLEQELGSREAAADLSELSEGEKDGKPDTHPPPAAAAAEAAADDGGGGDHQQQQQQPPPHQLSRFARINSDPRIVSDEEEEVTTDRNLYIVLISIHGLVRGENMELGRDSDTGGQVKYVVELARALAATPGVHRVDLLTRQISCPDVDWTYGEPVEMLTVPAADADDEDGGGGSSGGAYIVRLPCGPRDKYLPKESLWPHIPEFVDRALAHVTNVARALGEQLSPPPPSDGAGAAAQAVWPYVIHGHYADAAEVAALLASALNVPMVMTGHSLGRNKLEQLLKLGRMPRAEIQGTYKIARRIEAEETGLDAADMVVTSTKQEIEEQWGLYDGFDLKVERKLRVRRRRGVSCLGRYMPRMVVIPPGMDFSYVDTQDLAADGAGGAGDAADLQLLINPNKAKKPLPPIWSEVLRFFTNPHKPMILALSRPDPKKNVTTLLKAYGESRHLRELANLTLILGNRDDIEEMSGGAATVLTAVLKLIDRYDLYGQVAYPKHHKQTDVPHIYRLAAKTKGVFINPALVEPFGLTIIEAAAYGLPVVATKNGGPVDILKVLSNGLLVDPHDAAAITAALLSLLADKSRWSECRRSGLRNIHRFSWPHHCRLYLSHVAASCDHPAPHQLLRVPPSPSSSSAAAAAAGGGGAAASSEPLSDSLRDLSLRISVDAASPDLSAGDSAAAILDALRRRRSTDRPAASSAARAIGFAPGRRQSLLVVAIDCYGDDGKPNVEQLKKVVELAMSAGDGDDAGGRGYVLSTGMTIPEAVDALRACGADPAGFDALICSSGAEICYPWKGEQLAADEEYAGHVAFRWPGDHVRSAVPRLGKADGAQEADLAVDAAACSVHCHAYAAKDASKVKKVDWIRQALRMRGFRCNLVYTRACTRLNVVPLSASRPRALRYLSIQWGIDLSKVAVLVGEKGDTDRERLLPGLHRTVILPGMVAAGSEELLRDEDGFTTEDVVAMDSPNIVTLADGQDIAAAAADLLKAI</sequence>
<evidence type="ECO:0000250" key="1"/>
<evidence type="ECO:0000256" key="2">
    <source>
        <dbReference type="SAM" id="MobiDB-lite"/>
    </source>
</evidence>
<evidence type="ECO:0000269" key="3">
    <source>
    </source>
</evidence>
<evidence type="ECO:0000305" key="4"/>
<accession>Q53JI9</accession>
<accession>Q0ITN3</accession>
<accession>Q53NB0</accession>
<proteinExistence type="evidence at transcript level"/>
<protein>
    <recommendedName>
        <fullName>Probable sucrose-phosphate synthase 5</fullName>
        <ecNumber>2.4.1.14</ecNumber>
    </recommendedName>
    <alternativeName>
        <fullName>Sucrose phosphate synthase 5F</fullName>
        <shortName>OsSPS5F</shortName>
    </alternativeName>
    <alternativeName>
        <fullName>UDP-glucose-fructose-phosphate glucosyltransferase</fullName>
    </alternativeName>
</protein>
<keyword id="KW-0328">Glycosyltransferase</keyword>
<keyword id="KW-1185">Reference proteome</keyword>
<keyword id="KW-0808">Transferase</keyword>
<dbReference type="EC" id="2.4.1.14"/>
<dbReference type="EMBL" id="AC135258">
    <property type="protein sequence ID" value="AAX96649.1"/>
    <property type="molecule type" value="Genomic_DNA"/>
</dbReference>
<dbReference type="EMBL" id="AC147811">
    <property type="protein sequence ID" value="AAX95196.1"/>
    <property type="molecule type" value="Genomic_DNA"/>
</dbReference>
<dbReference type="EMBL" id="DP000010">
    <property type="protein sequence ID" value="ABA92286.1"/>
    <property type="molecule type" value="Genomic_DNA"/>
</dbReference>
<dbReference type="EMBL" id="AP008217">
    <property type="protein sequence ID" value="BAF27932.2"/>
    <property type="status" value="ALT_SEQ"/>
    <property type="molecule type" value="Genomic_DNA"/>
</dbReference>
<dbReference type="EMBL" id="AP014967">
    <property type="status" value="NOT_ANNOTATED_CDS"/>
    <property type="molecule type" value="Genomic_DNA"/>
</dbReference>
<dbReference type="SMR" id="Q53JI9"/>
<dbReference type="FunCoup" id="Q53JI9">
    <property type="interactions" value="139"/>
</dbReference>
<dbReference type="STRING" id="39947.Q53JI9"/>
<dbReference type="CAZy" id="GT4">
    <property type="family name" value="Glycosyltransferase Family 4"/>
</dbReference>
<dbReference type="iPTMnet" id="Q53JI9"/>
<dbReference type="PaxDb" id="39947-Q53JI9"/>
<dbReference type="KEGG" id="dosa:Os11g0236100"/>
<dbReference type="KEGG" id="osa:4350151"/>
<dbReference type="eggNOG" id="KOG0853">
    <property type="taxonomic scope" value="Eukaryota"/>
</dbReference>
<dbReference type="HOGENOM" id="CLU_009583_24_1_1"/>
<dbReference type="InParanoid" id="Q53JI9"/>
<dbReference type="OrthoDB" id="512920at2759"/>
<dbReference type="BRENDA" id="2.4.1.14">
    <property type="organism ID" value="8948"/>
</dbReference>
<dbReference type="PlantReactome" id="R-OSA-1119465">
    <property type="pathway name" value="Sucrose biosynthesis"/>
</dbReference>
<dbReference type="UniPathway" id="UPA00371">
    <property type="reaction ID" value="UER00545"/>
</dbReference>
<dbReference type="Proteomes" id="UP000000763">
    <property type="component" value="Chromosome 11"/>
</dbReference>
<dbReference type="Proteomes" id="UP000059680">
    <property type="component" value="Chromosome 11"/>
</dbReference>
<dbReference type="GO" id="GO:0046524">
    <property type="term" value="F:sucrose-phosphate synthase activity"/>
    <property type="evidence" value="ECO:0007669"/>
    <property type="project" value="UniProtKB-EC"/>
</dbReference>
<dbReference type="GO" id="GO:0005986">
    <property type="term" value="P:sucrose biosynthetic process"/>
    <property type="evidence" value="ECO:0007669"/>
    <property type="project" value="UniProtKB-UniPathway"/>
</dbReference>
<dbReference type="CDD" id="cd16419">
    <property type="entry name" value="HAD_SPS"/>
    <property type="match status" value="1"/>
</dbReference>
<dbReference type="Gene3D" id="3.90.1070.10">
    <property type="match status" value="1"/>
</dbReference>
<dbReference type="Gene3D" id="3.40.50.2000">
    <property type="entry name" value="Glycogen Phosphorylase B"/>
    <property type="match status" value="2"/>
</dbReference>
<dbReference type="Gene3D" id="3.40.50.1000">
    <property type="entry name" value="HAD superfamily/HAD-like"/>
    <property type="match status" value="1"/>
</dbReference>
<dbReference type="InterPro" id="IPR001296">
    <property type="entry name" value="Glyco_trans_1"/>
</dbReference>
<dbReference type="InterPro" id="IPR028098">
    <property type="entry name" value="Glyco_trans_4-like_N"/>
</dbReference>
<dbReference type="InterPro" id="IPR023214">
    <property type="entry name" value="HAD_sf"/>
</dbReference>
<dbReference type="InterPro" id="IPR006380">
    <property type="entry name" value="SPP-like_dom"/>
</dbReference>
<dbReference type="InterPro" id="IPR044161">
    <property type="entry name" value="SPS"/>
</dbReference>
<dbReference type="InterPro" id="IPR035659">
    <property type="entry name" value="SPS_C"/>
</dbReference>
<dbReference type="InterPro" id="IPR012819">
    <property type="entry name" value="SPS_pln"/>
</dbReference>
<dbReference type="NCBIfam" id="TIGR02468">
    <property type="entry name" value="sucrsPsyn_pln"/>
    <property type="match status" value="1"/>
</dbReference>
<dbReference type="PANTHER" id="PTHR46039">
    <property type="entry name" value="SUCROSE-PHOSPHATE SYNTHASE 3-RELATED"/>
    <property type="match status" value="1"/>
</dbReference>
<dbReference type="PANTHER" id="PTHR46039:SF1">
    <property type="entry name" value="SUCROSE-PHOSPHATE SYNTHASE 4"/>
    <property type="match status" value="1"/>
</dbReference>
<dbReference type="Pfam" id="PF13579">
    <property type="entry name" value="Glyco_trans_4_4"/>
    <property type="match status" value="1"/>
</dbReference>
<dbReference type="Pfam" id="PF00534">
    <property type="entry name" value="Glycos_transf_1"/>
    <property type="match status" value="1"/>
</dbReference>
<dbReference type="Pfam" id="PF05116">
    <property type="entry name" value="S6PP"/>
    <property type="match status" value="1"/>
</dbReference>
<dbReference type="SUPFAM" id="SSF53756">
    <property type="entry name" value="UDP-Glycosyltransferase/glycogen phosphorylase"/>
    <property type="match status" value="1"/>
</dbReference>
<gene>
    <name type="primary">SPS5</name>
    <name type="synonym">SPS11</name>
    <name type="ordered locus">Os11g0236100</name>
    <name type="ordered locus">LOC_Os11g12810</name>
</gene>
<comment type="function">
    <text evidence="1">Plays a role in photosynthetic sucrose synthesis by catalyzing the rate-limiting step of sucrose biosynthesis from UDP-glucose and fructose- 6-phosphate. Involved in the regulation of carbon partitioning in the leaves of plants. May regulate the synthesis of sucrose and therefore play a major role as a limiting factor in the export of photoassimilates out of the leaf. Plays a role for sucrose availability that is essential for plant growth and fiber elongation (By similarity).</text>
</comment>
<comment type="catalytic activity">
    <reaction>
        <text>beta-D-fructose 6-phosphate + UDP-alpha-D-glucose = sucrose 6(F)-phosphate + UDP + H(+)</text>
        <dbReference type="Rhea" id="RHEA:22172"/>
        <dbReference type="ChEBI" id="CHEBI:15378"/>
        <dbReference type="ChEBI" id="CHEBI:57634"/>
        <dbReference type="ChEBI" id="CHEBI:57723"/>
        <dbReference type="ChEBI" id="CHEBI:58223"/>
        <dbReference type="ChEBI" id="CHEBI:58885"/>
        <dbReference type="EC" id="2.4.1.14"/>
    </reaction>
</comment>
<comment type="activity regulation">
    <text evidence="1">Activity is regulated by phosphorylation and moderated by concentration of metabolites and light.</text>
</comment>
<comment type="pathway">
    <text>Glycan biosynthesis; sucrose biosynthesis; sucrose from D-fructose 6-phosphate and UDP-alpha-D-glucose: step 1/2.</text>
</comment>
<comment type="subunit">
    <text evidence="1">Homodimer or homotetramer.</text>
</comment>
<comment type="tissue specificity">
    <text evidence="3">Expressed in germinating seeds.</text>
</comment>
<comment type="developmental stage">
    <text evidence="3">Expressed in source leaves and sink leaves.</text>
</comment>
<comment type="induction">
    <text evidence="3">Circadian-regulated, with the highest expression 1 hour after the beginning of dark period (in 14 hours light/10 hours dark cycle).</text>
</comment>
<comment type="similarity">
    <text evidence="4">Belongs to the glycosyltransferase 1 family.</text>
</comment>
<comment type="sequence caution" evidence="4">
    <conflict type="erroneous gene model prediction">
        <sequence resource="EMBL-CDS" id="BAF27932"/>
    </conflict>
</comment>
<feature type="chain" id="PRO_0000413644" description="Probable sucrose-phosphate synthase 5">
    <location>
        <begin position="1"/>
        <end position="1014"/>
    </location>
</feature>
<feature type="region of interest" description="Disordered" evidence="2">
    <location>
        <begin position="29"/>
        <end position="108"/>
    </location>
</feature>
<feature type="region of interest" description="Disordered" evidence="2">
    <location>
        <begin position="648"/>
        <end position="677"/>
    </location>
</feature>
<feature type="compositionally biased region" description="Basic and acidic residues" evidence="2">
    <location>
        <begin position="29"/>
        <end position="41"/>
    </location>
</feature>
<feature type="compositionally biased region" description="Basic and acidic residues" evidence="2">
    <location>
        <begin position="49"/>
        <end position="58"/>
    </location>
</feature>
<organism>
    <name type="scientific">Oryza sativa subsp. japonica</name>
    <name type="common">Rice</name>
    <dbReference type="NCBI Taxonomy" id="39947"/>
    <lineage>
        <taxon>Eukaryota</taxon>
        <taxon>Viridiplantae</taxon>
        <taxon>Streptophyta</taxon>
        <taxon>Embryophyta</taxon>
        <taxon>Tracheophyta</taxon>
        <taxon>Spermatophyta</taxon>
        <taxon>Magnoliopsida</taxon>
        <taxon>Liliopsida</taxon>
        <taxon>Poales</taxon>
        <taxon>Poaceae</taxon>
        <taxon>BOP clade</taxon>
        <taxon>Oryzoideae</taxon>
        <taxon>Oryzeae</taxon>
        <taxon>Oryzinae</taxon>
        <taxon>Oryza</taxon>
        <taxon>Oryza sativa</taxon>
    </lineage>
</organism>
<reference key="1">
    <citation type="journal article" date="2005" name="BMC Biol.">
        <title>The sequence of rice chromosomes 11 and 12, rich in disease resistance genes and recent gene duplications.</title>
        <authorList>
            <consortium name="The rice chromosomes 11 and 12 sequencing consortia"/>
        </authorList>
    </citation>
    <scope>NUCLEOTIDE SEQUENCE [LARGE SCALE GENOMIC DNA]</scope>
    <source>
        <strain>cv. Nipponbare</strain>
    </source>
</reference>
<reference key="2">
    <citation type="journal article" date="2005" name="Nature">
        <title>The map-based sequence of the rice genome.</title>
        <authorList>
            <consortium name="International rice genome sequencing project (IRGSP)"/>
        </authorList>
    </citation>
    <scope>NUCLEOTIDE SEQUENCE [LARGE SCALE GENOMIC DNA]</scope>
    <source>
        <strain>cv. Nipponbare</strain>
    </source>
</reference>
<reference key="3">
    <citation type="journal article" date="2008" name="Nucleic Acids Res.">
        <title>The rice annotation project database (RAP-DB): 2008 update.</title>
        <authorList>
            <consortium name="The rice annotation project (RAP)"/>
        </authorList>
    </citation>
    <scope>GENOME REANNOTATION</scope>
    <source>
        <strain>cv. Nipponbare</strain>
    </source>
</reference>
<reference key="4">
    <citation type="journal article" date="2013" name="Rice">
        <title>Improvement of the Oryza sativa Nipponbare reference genome using next generation sequence and optical map data.</title>
        <authorList>
            <person name="Kawahara Y."/>
            <person name="de la Bastide M."/>
            <person name="Hamilton J.P."/>
            <person name="Kanamori H."/>
            <person name="McCombie W.R."/>
            <person name="Ouyang S."/>
            <person name="Schwartz D.C."/>
            <person name="Tanaka T."/>
            <person name="Wu J."/>
            <person name="Zhou S."/>
            <person name="Childs K.L."/>
            <person name="Davidson R.M."/>
            <person name="Lin H."/>
            <person name="Quesada-Ocampo L."/>
            <person name="Vaillancourt B."/>
            <person name="Sakai H."/>
            <person name="Lee S.S."/>
            <person name="Kim J."/>
            <person name="Numa H."/>
            <person name="Itoh T."/>
            <person name="Buell C.R."/>
            <person name="Matsumoto T."/>
        </authorList>
    </citation>
    <scope>GENOME REANNOTATION</scope>
    <source>
        <strain>cv. Nipponbare</strain>
    </source>
</reference>
<reference key="5">
    <citation type="journal article" date="2007" name="J. Plant Physiol.">
        <title>Phylogenetic and expression analysis of sucrose phosphate synthase isozymes in plants.</title>
        <authorList>
            <person name="Lutfiyya L.L."/>
            <person name="Xu N."/>
            <person name="D'Ordine R.L."/>
            <person name="Morrell J.A."/>
            <person name="Miller P.W."/>
            <person name="Duff S.M."/>
        </authorList>
    </citation>
    <scope>GENE FAMILY</scope>
</reference>
<reference key="6">
    <citation type="journal article" date="2011" name="Plant Sci.">
        <title>Tissue specificity and diurnal change in gene expression of the sucrose phosphate synthase gene family in rice.</title>
        <authorList>
            <person name="Okamura M."/>
            <person name="Aoki N."/>
            <person name="Hirose T."/>
            <person name="Yonekura M."/>
            <person name="Ohto C."/>
            <person name="Ohsugi R."/>
        </authorList>
    </citation>
    <scope>TISSUE SPECIFICITY</scope>
    <scope>DEVELOPMENTAL STAGE</scope>
    <scope>INDUCTION</scope>
</reference>
<name>SPSA5_ORYSJ</name>